<sequence>DHEIAAAAGVPIPTIFEMEGEQGFRSRETAILKKLIVLPHIVLSTGGGAVLKEENRALIRKSGTVVYLHAPPETLLERTRCDNSRPLLQVADPLAKLRELYAARDPVYRQTADFTVESANCRETVQTLLKRLSR</sequence>
<keyword id="KW-0028">Amino-acid biosynthesis</keyword>
<keyword id="KW-0057">Aromatic amino acid biosynthesis</keyword>
<keyword id="KW-0067">ATP-binding</keyword>
<keyword id="KW-0963">Cytoplasm</keyword>
<keyword id="KW-0418">Kinase</keyword>
<keyword id="KW-0547">Nucleotide-binding</keyword>
<keyword id="KW-0808">Transferase</keyword>
<dbReference type="EC" id="2.7.1.71"/>
<dbReference type="EMBL" id="AJ002783">
    <property type="protein sequence ID" value="CAA05721.1"/>
    <property type="molecule type" value="Genomic_DNA"/>
</dbReference>
<dbReference type="SMR" id="O50467"/>
<dbReference type="UniPathway" id="UPA00053">
    <property type="reaction ID" value="UER00088"/>
</dbReference>
<dbReference type="GO" id="GO:0005829">
    <property type="term" value="C:cytosol"/>
    <property type="evidence" value="ECO:0007669"/>
    <property type="project" value="TreeGrafter"/>
</dbReference>
<dbReference type="GO" id="GO:0005524">
    <property type="term" value="F:ATP binding"/>
    <property type="evidence" value="ECO:0007669"/>
    <property type="project" value="UniProtKB-KW"/>
</dbReference>
<dbReference type="GO" id="GO:0004765">
    <property type="term" value="F:shikimate kinase activity"/>
    <property type="evidence" value="ECO:0007669"/>
    <property type="project" value="UniProtKB-EC"/>
</dbReference>
<dbReference type="GO" id="GO:0008652">
    <property type="term" value="P:amino acid biosynthetic process"/>
    <property type="evidence" value="ECO:0007669"/>
    <property type="project" value="UniProtKB-KW"/>
</dbReference>
<dbReference type="GO" id="GO:0009073">
    <property type="term" value="P:aromatic amino acid family biosynthetic process"/>
    <property type="evidence" value="ECO:0007669"/>
    <property type="project" value="UniProtKB-KW"/>
</dbReference>
<dbReference type="GO" id="GO:0009423">
    <property type="term" value="P:chorismate biosynthetic process"/>
    <property type="evidence" value="ECO:0007669"/>
    <property type="project" value="UniProtKB-UniPathway"/>
</dbReference>
<dbReference type="CDD" id="cd00464">
    <property type="entry name" value="SK"/>
    <property type="match status" value="1"/>
</dbReference>
<dbReference type="Gene3D" id="3.40.50.300">
    <property type="entry name" value="P-loop containing nucleotide triphosphate hydrolases"/>
    <property type="match status" value="1"/>
</dbReference>
<dbReference type="InterPro" id="IPR027417">
    <property type="entry name" value="P-loop_NTPase"/>
</dbReference>
<dbReference type="InterPro" id="IPR031322">
    <property type="entry name" value="Shikimate/glucono_kinase"/>
</dbReference>
<dbReference type="InterPro" id="IPR000623">
    <property type="entry name" value="Shikimate_kinase/TSH1"/>
</dbReference>
<dbReference type="InterPro" id="IPR023000">
    <property type="entry name" value="Shikimate_kinase_CS"/>
</dbReference>
<dbReference type="PANTHER" id="PTHR21087">
    <property type="entry name" value="SHIKIMATE KINASE"/>
    <property type="match status" value="1"/>
</dbReference>
<dbReference type="PANTHER" id="PTHR21087:SF16">
    <property type="entry name" value="SHIKIMATE KINASE 1, CHLOROPLASTIC"/>
    <property type="match status" value="1"/>
</dbReference>
<dbReference type="Pfam" id="PF01202">
    <property type="entry name" value="SKI"/>
    <property type="match status" value="1"/>
</dbReference>
<dbReference type="PRINTS" id="PR01100">
    <property type="entry name" value="SHIKIMTKNASE"/>
</dbReference>
<dbReference type="SUPFAM" id="SSF52540">
    <property type="entry name" value="P-loop containing nucleoside triphosphate hydrolases"/>
    <property type="match status" value="1"/>
</dbReference>
<dbReference type="PROSITE" id="PS01128">
    <property type="entry name" value="SHIKIMATE_KINASE"/>
    <property type="match status" value="1"/>
</dbReference>
<proteinExistence type="inferred from homology"/>
<comment type="catalytic activity">
    <reaction>
        <text>shikimate + ATP = 3-phosphoshikimate + ADP + H(+)</text>
        <dbReference type="Rhea" id="RHEA:13121"/>
        <dbReference type="ChEBI" id="CHEBI:15378"/>
        <dbReference type="ChEBI" id="CHEBI:30616"/>
        <dbReference type="ChEBI" id="CHEBI:36208"/>
        <dbReference type="ChEBI" id="CHEBI:145989"/>
        <dbReference type="ChEBI" id="CHEBI:456216"/>
        <dbReference type="EC" id="2.7.1.71"/>
    </reaction>
</comment>
<comment type="pathway">
    <text>Metabolic intermediate biosynthesis; chorismate biosynthesis; chorismate from D-erythrose 4-phosphate and phosphoenolpyruvate: step 5/7.</text>
</comment>
<comment type="subcellular location">
    <subcellularLocation>
        <location evidence="1">Cytoplasm</location>
    </subcellularLocation>
</comment>
<comment type="similarity">
    <text evidence="2">Belongs to the shikimate kinase family.</text>
</comment>
<evidence type="ECO:0000250" key="1"/>
<evidence type="ECO:0000305" key="2"/>
<gene>
    <name type="primary">aroK</name>
</gene>
<accession>O50467</accession>
<feature type="chain" id="PRO_0000192394" description="Shikimate kinase">
    <location>
        <begin position="1" status="less than"/>
        <end position="134"/>
    </location>
</feature>
<feature type="non-terminal residue">
    <location>
        <position position="1"/>
    </location>
</feature>
<organism>
    <name type="scientific">Neisseria gonorrhoeae</name>
    <dbReference type="NCBI Taxonomy" id="485"/>
    <lineage>
        <taxon>Bacteria</taxon>
        <taxon>Pseudomonadati</taxon>
        <taxon>Pseudomonadota</taxon>
        <taxon>Betaproteobacteria</taxon>
        <taxon>Neisseriales</taxon>
        <taxon>Neisseriaceae</taxon>
        <taxon>Neisseria</taxon>
    </lineage>
</organism>
<reference key="1">
    <citation type="submission" date="1997-11" db="EMBL/GenBank/DDBJ databases">
        <authorList>
            <person name="Barten R."/>
            <person name="Meyer T.F."/>
        </authorList>
    </citation>
    <scope>NUCLEOTIDE SEQUENCE [GENOMIC DNA]</scope>
    <source>
        <strain>MS11A</strain>
    </source>
</reference>
<name>AROK_NEIGO</name>
<protein>
    <recommendedName>
        <fullName>Shikimate kinase</fullName>
        <shortName>SK</shortName>
        <ecNumber>2.7.1.71</ecNumber>
    </recommendedName>
</protein>